<organism>
    <name type="scientific">Nitrosococcus oceani (strain ATCC 19707 / BCRC 17464 / JCM 30415 / NCIMB 11848 / C-107)</name>
    <dbReference type="NCBI Taxonomy" id="323261"/>
    <lineage>
        <taxon>Bacteria</taxon>
        <taxon>Pseudomonadati</taxon>
        <taxon>Pseudomonadota</taxon>
        <taxon>Gammaproteobacteria</taxon>
        <taxon>Chromatiales</taxon>
        <taxon>Chromatiaceae</taxon>
        <taxon>Nitrosococcus</taxon>
    </lineage>
</organism>
<sequence>MDKLLINGGISLNGEIRISGAKNAALPILAATLLASEPVKICNIPHLHDITTTMELLGRMGAQLMVDEHLNIEVDTRNLKEFYAPYELVKTMRASILVLGPLLARYGRADVSLPGGCAIGSRPVNLHIHGLQAMGATITVEEGYICARSQGRLRGTRLFMDRVSVTGTENLMMAATLAEGTTFIENAAREPEVVDLAHCLNQMGARISGMGSDTLVIEGVDSLGGASHTVLPDRIETGTYLVAGALTGGRVKLKNTSPGSLEAVLLKLEEAGAEINTGKDWIVLDMKGRRPRAVDIRTAPYPAFPTDMQAQFTTLNIVAEGSGTITETVFENRFMHVQELQRMGAVIRLEGNTAFTNGVETLTGAPVMATDLRASASLVLAGLVAKGVTAVDRIYHVDRGYECIEEKLQQLGAKIRRVSSYTPGKIYAAYG</sequence>
<keyword id="KW-0131">Cell cycle</keyword>
<keyword id="KW-0132">Cell division</keyword>
<keyword id="KW-0133">Cell shape</keyword>
<keyword id="KW-0961">Cell wall biogenesis/degradation</keyword>
<keyword id="KW-0963">Cytoplasm</keyword>
<keyword id="KW-0573">Peptidoglycan synthesis</keyword>
<keyword id="KW-0670">Pyruvate</keyword>
<keyword id="KW-1185">Reference proteome</keyword>
<keyword id="KW-0808">Transferase</keyword>
<accession>Q3J7G9</accession>
<protein>
    <recommendedName>
        <fullName evidence="1">UDP-N-acetylglucosamine 1-carboxyvinyltransferase</fullName>
        <ecNumber evidence="1">2.5.1.7</ecNumber>
    </recommendedName>
    <alternativeName>
        <fullName evidence="1">Enoylpyruvate transferase</fullName>
    </alternativeName>
    <alternativeName>
        <fullName evidence="1">UDP-N-acetylglucosamine enolpyruvyl transferase</fullName>
        <shortName evidence="1">EPT</shortName>
    </alternativeName>
</protein>
<gene>
    <name evidence="1" type="primary">murA</name>
    <name type="ordered locus">Noc_2780</name>
</gene>
<proteinExistence type="inferred from homology"/>
<feature type="chain" id="PRO_0000231227" description="UDP-N-acetylglucosamine 1-carboxyvinyltransferase">
    <location>
        <begin position="1"/>
        <end position="431"/>
    </location>
</feature>
<feature type="active site" description="Proton donor" evidence="1">
    <location>
        <position position="117"/>
    </location>
</feature>
<feature type="binding site" evidence="1">
    <location>
        <begin position="22"/>
        <end position="23"/>
    </location>
    <ligand>
        <name>phosphoenolpyruvate</name>
        <dbReference type="ChEBI" id="CHEBI:58702"/>
    </ligand>
</feature>
<feature type="binding site" evidence="1">
    <location>
        <position position="93"/>
    </location>
    <ligand>
        <name>UDP-N-acetyl-alpha-D-glucosamine</name>
        <dbReference type="ChEBI" id="CHEBI:57705"/>
    </ligand>
</feature>
<feature type="binding site" evidence="1">
    <location>
        <position position="307"/>
    </location>
    <ligand>
        <name>UDP-N-acetyl-alpha-D-glucosamine</name>
        <dbReference type="ChEBI" id="CHEBI:57705"/>
    </ligand>
</feature>
<feature type="binding site" evidence="1">
    <location>
        <position position="329"/>
    </location>
    <ligand>
        <name>UDP-N-acetyl-alpha-D-glucosamine</name>
        <dbReference type="ChEBI" id="CHEBI:57705"/>
    </ligand>
</feature>
<feature type="modified residue" description="2-(S-cysteinyl)pyruvic acid O-phosphothioketal" evidence="1">
    <location>
        <position position="117"/>
    </location>
</feature>
<evidence type="ECO:0000255" key="1">
    <source>
        <dbReference type="HAMAP-Rule" id="MF_00111"/>
    </source>
</evidence>
<reference key="1">
    <citation type="journal article" date="2006" name="Appl. Environ. Microbiol.">
        <title>Complete genome sequence of the marine, chemolithoautotrophic, ammonia-oxidizing bacterium Nitrosococcus oceani ATCC 19707.</title>
        <authorList>
            <person name="Klotz M.G."/>
            <person name="Arp D.J."/>
            <person name="Chain P.S.G."/>
            <person name="El-Sheikh A.F."/>
            <person name="Hauser L.J."/>
            <person name="Hommes N.G."/>
            <person name="Larimer F.W."/>
            <person name="Malfatti S.A."/>
            <person name="Norton J.M."/>
            <person name="Poret-Peterson A.T."/>
            <person name="Vergez L.M."/>
            <person name="Ward B.B."/>
        </authorList>
    </citation>
    <scope>NUCLEOTIDE SEQUENCE [LARGE SCALE GENOMIC DNA]</scope>
    <source>
        <strain>ATCC 19707 / BCRC 17464 / JCM 30415 / NCIMB 11848 / C-107</strain>
    </source>
</reference>
<name>MURA_NITOC</name>
<dbReference type="EC" id="2.5.1.7" evidence="1"/>
<dbReference type="EMBL" id="CP000127">
    <property type="protein sequence ID" value="ABA59227.1"/>
    <property type="molecule type" value="Genomic_DNA"/>
</dbReference>
<dbReference type="RefSeq" id="WP_002813654.1">
    <property type="nucleotide sequence ID" value="NC_007484.1"/>
</dbReference>
<dbReference type="SMR" id="Q3J7G9"/>
<dbReference type="FunCoup" id="Q3J7G9">
    <property type="interactions" value="455"/>
</dbReference>
<dbReference type="STRING" id="323261.Noc_2780"/>
<dbReference type="KEGG" id="noc:Noc_2780"/>
<dbReference type="eggNOG" id="COG0766">
    <property type="taxonomic scope" value="Bacteria"/>
</dbReference>
<dbReference type="HOGENOM" id="CLU_027387_0_0_6"/>
<dbReference type="InParanoid" id="Q3J7G9"/>
<dbReference type="UniPathway" id="UPA00219"/>
<dbReference type="Proteomes" id="UP000006838">
    <property type="component" value="Chromosome"/>
</dbReference>
<dbReference type="GO" id="GO:0005737">
    <property type="term" value="C:cytoplasm"/>
    <property type="evidence" value="ECO:0007669"/>
    <property type="project" value="UniProtKB-SubCell"/>
</dbReference>
<dbReference type="GO" id="GO:0008760">
    <property type="term" value="F:UDP-N-acetylglucosamine 1-carboxyvinyltransferase activity"/>
    <property type="evidence" value="ECO:0007669"/>
    <property type="project" value="UniProtKB-UniRule"/>
</dbReference>
<dbReference type="GO" id="GO:0051301">
    <property type="term" value="P:cell division"/>
    <property type="evidence" value="ECO:0007669"/>
    <property type="project" value="UniProtKB-KW"/>
</dbReference>
<dbReference type="GO" id="GO:0071555">
    <property type="term" value="P:cell wall organization"/>
    <property type="evidence" value="ECO:0007669"/>
    <property type="project" value="UniProtKB-KW"/>
</dbReference>
<dbReference type="GO" id="GO:0009252">
    <property type="term" value="P:peptidoglycan biosynthetic process"/>
    <property type="evidence" value="ECO:0007669"/>
    <property type="project" value="UniProtKB-UniRule"/>
</dbReference>
<dbReference type="GO" id="GO:0008360">
    <property type="term" value="P:regulation of cell shape"/>
    <property type="evidence" value="ECO:0007669"/>
    <property type="project" value="UniProtKB-KW"/>
</dbReference>
<dbReference type="GO" id="GO:0019277">
    <property type="term" value="P:UDP-N-acetylgalactosamine biosynthetic process"/>
    <property type="evidence" value="ECO:0007669"/>
    <property type="project" value="InterPro"/>
</dbReference>
<dbReference type="CDD" id="cd01555">
    <property type="entry name" value="UdpNAET"/>
    <property type="match status" value="1"/>
</dbReference>
<dbReference type="FunFam" id="3.65.10.10:FF:000002">
    <property type="entry name" value="UDP-N-acetylglucosamine 1-carboxyvinyltransferase"/>
    <property type="match status" value="1"/>
</dbReference>
<dbReference type="Gene3D" id="3.65.10.10">
    <property type="entry name" value="Enolpyruvate transferase domain"/>
    <property type="match status" value="2"/>
</dbReference>
<dbReference type="HAMAP" id="MF_00111">
    <property type="entry name" value="MurA"/>
    <property type="match status" value="1"/>
</dbReference>
<dbReference type="InterPro" id="IPR001986">
    <property type="entry name" value="Enolpyruvate_Tfrase_dom"/>
</dbReference>
<dbReference type="InterPro" id="IPR036968">
    <property type="entry name" value="Enolpyruvate_Tfrase_sf"/>
</dbReference>
<dbReference type="InterPro" id="IPR050068">
    <property type="entry name" value="MurA_subfamily"/>
</dbReference>
<dbReference type="InterPro" id="IPR013792">
    <property type="entry name" value="RNA3'P_cycl/enolpyr_Trfase_a/b"/>
</dbReference>
<dbReference type="InterPro" id="IPR005750">
    <property type="entry name" value="UDP_GlcNAc_COvinyl_MurA"/>
</dbReference>
<dbReference type="NCBIfam" id="TIGR01072">
    <property type="entry name" value="murA"/>
    <property type="match status" value="1"/>
</dbReference>
<dbReference type="NCBIfam" id="NF006873">
    <property type="entry name" value="PRK09369.1"/>
    <property type="match status" value="1"/>
</dbReference>
<dbReference type="PANTHER" id="PTHR43783">
    <property type="entry name" value="UDP-N-ACETYLGLUCOSAMINE 1-CARBOXYVINYLTRANSFERASE"/>
    <property type="match status" value="1"/>
</dbReference>
<dbReference type="PANTHER" id="PTHR43783:SF1">
    <property type="entry name" value="UDP-N-ACETYLGLUCOSAMINE 1-CARBOXYVINYLTRANSFERASE"/>
    <property type="match status" value="1"/>
</dbReference>
<dbReference type="Pfam" id="PF00275">
    <property type="entry name" value="EPSP_synthase"/>
    <property type="match status" value="1"/>
</dbReference>
<dbReference type="SUPFAM" id="SSF55205">
    <property type="entry name" value="EPT/RTPC-like"/>
    <property type="match status" value="1"/>
</dbReference>
<comment type="function">
    <text evidence="1">Cell wall formation. Adds enolpyruvyl to UDP-N-acetylglucosamine.</text>
</comment>
<comment type="catalytic activity">
    <reaction evidence="1">
        <text>phosphoenolpyruvate + UDP-N-acetyl-alpha-D-glucosamine = UDP-N-acetyl-3-O-(1-carboxyvinyl)-alpha-D-glucosamine + phosphate</text>
        <dbReference type="Rhea" id="RHEA:18681"/>
        <dbReference type="ChEBI" id="CHEBI:43474"/>
        <dbReference type="ChEBI" id="CHEBI:57705"/>
        <dbReference type="ChEBI" id="CHEBI:58702"/>
        <dbReference type="ChEBI" id="CHEBI:68483"/>
        <dbReference type="EC" id="2.5.1.7"/>
    </reaction>
</comment>
<comment type="pathway">
    <text evidence="1">Cell wall biogenesis; peptidoglycan biosynthesis.</text>
</comment>
<comment type="subcellular location">
    <subcellularLocation>
        <location evidence="1">Cytoplasm</location>
    </subcellularLocation>
</comment>
<comment type="similarity">
    <text evidence="1">Belongs to the EPSP synthase family. MurA subfamily.</text>
</comment>